<dbReference type="EC" id="3.6.4.-"/>
<dbReference type="EMBL" id="AK023142">
    <property type="protein sequence ID" value="BAB14426.1"/>
    <property type="molecule type" value="mRNA"/>
</dbReference>
<dbReference type="EMBL" id="AK023411">
    <property type="protein sequence ID" value="BAB14567.1"/>
    <property type="status" value="ALT_INIT"/>
    <property type="molecule type" value="mRNA"/>
</dbReference>
<dbReference type="EMBL" id="AL834387">
    <property type="protein sequence ID" value="CAD39050.1"/>
    <property type="molecule type" value="mRNA"/>
</dbReference>
<dbReference type="EMBL" id="AC018705">
    <property type="protein sequence ID" value="AAS01996.1"/>
    <property type="molecule type" value="Genomic_DNA"/>
</dbReference>
<dbReference type="EMBL" id="CH236955">
    <property type="protein sequence ID" value="EAL23899.1"/>
    <property type="molecule type" value="Genomic_DNA"/>
</dbReference>
<dbReference type="EMBL" id="CH471128">
    <property type="protein sequence ID" value="EAW60975.1"/>
    <property type="molecule type" value="Genomic_DNA"/>
</dbReference>
<dbReference type="EMBL" id="CH471128">
    <property type="protein sequence ID" value="EAW60976.1"/>
    <property type="molecule type" value="Genomic_DNA"/>
</dbReference>
<dbReference type="EMBL" id="BC051867">
    <property type="protein sequence ID" value="AAH51867.1"/>
    <property type="molecule type" value="mRNA"/>
</dbReference>
<dbReference type="CCDS" id="CCDS5510.1">
    <molecule id="Q6PIW4-1"/>
</dbReference>
<dbReference type="RefSeq" id="NP_001036227.1">
    <molecule id="Q6PIW4-1"/>
    <property type="nucleotide sequence ID" value="NM_001042762.5"/>
</dbReference>
<dbReference type="RefSeq" id="NP_001274421.1">
    <molecule id="Q6PIW4-1"/>
    <property type="nucleotide sequence ID" value="NM_001287492.4"/>
</dbReference>
<dbReference type="RefSeq" id="NP_001274422.1">
    <molecule id="Q6PIW4-1"/>
    <property type="nucleotide sequence ID" value="NM_001287493.3"/>
</dbReference>
<dbReference type="RefSeq" id="NP_001274423.1">
    <molecule id="Q6PIW4-1"/>
    <property type="nucleotide sequence ID" value="NM_001287494.4"/>
</dbReference>
<dbReference type="RefSeq" id="NP_001274424.1">
    <molecule id="Q6PIW4-1"/>
    <property type="nucleotide sequence ID" value="NM_001287495.3"/>
</dbReference>
<dbReference type="RefSeq" id="NP_001274425.1">
    <molecule id="Q6PIW4-2"/>
    <property type="nucleotide sequence ID" value="NM_001287496.4"/>
</dbReference>
<dbReference type="RefSeq" id="NP_001333487.1">
    <molecule id="Q6PIW4-2"/>
    <property type="nucleotide sequence ID" value="NM_001346558.3"/>
</dbReference>
<dbReference type="RefSeq" id="NP_001333488.1">
    <molecule id="Q6PIW4-2"/>
    <property type="nucleotide sequence ID" value="NM_001346559.3"/>
</dbReference>
<dbReference type="RefSeq" id="NP_001333489.1">
    <molecule id="Q6PIW4-1"/>
    <property type="nucleotide sequence ID" value="NM_001346560.3"/>
</dbReference>
<dbReference type="RefSeq" id="NP_001333490.1">
    <molecule id="Q6PIW4-1"/>
    <property type="nucleotide sequence ID" value="NM_001346561.3"/>
</dbReference>
<dbReference type="RefSeq" id="NP_001333491.1">
    <molecule id="Q6PIW4-1"/>
    <property type="nucleotide sequence ID" value="NM_001346562.3"/>
</dbReference>
<dbReference type="RefSeq" id="NP_001333492.1">
    <molecule id="Q6PIW4-1"/>
    <property type="nucleotide sequence ID" value="NM_001346563.3"/>
</dbReference>
<dbReference type="RefSeq" id="NP_001333493.1">
    <molecule id="Q6PIW4-1"/>
    <property type="nucleotide sequence ID" value="NM_001346564.3"/>
</dbReference>
<dbReference type="RefSeq" id="NP_001333494.1">
    <molecule id="Q6PIW4-1"/>
    <property type="nucleotide sequence ID" value="NM_001346565.3"/>
</dbReference>
<dbReference type="RefSeq" id="NP_071399.2">
    <molecule id="Q6PIW4-1"/>
    <property type="nucleotide sequence ID" value="NM_022116.5"/>
</dbReference>
<dbReference type="RefSeq" id="XP_011513772.1">
    <molecule id="Q6PIW4-1"/>
    <property type="nucleotide sequence ID" value="XM_011515470.4"/>
</dbReference>
<dbReference type="RefSeq" id="XP_016867990.1">
    <molecule id="Q6PIW4-1"/>
    <property type="nucleotide sequence ID" value="XM_017012501.2"/>
</dbReference>
<dbReference type="RefSeq" id="XP_024302631.1">
    <molecule id="Q6PIW4-1"/>
    <property type="nucleotide sequence ID" value="XM_024446863.2"/>
</dbReference>
<dbReference type="RefSeq" id="XP_024302632.1">
    <molecule id="Q6PIW4-1"/>
    <property type="nucleotide sequence ID" value="XM_024446864.2"/>
</dbReference>
<dbReference type="RefSeq" id="XP_024302633.1">
    <molecule id="Q6PIW4-1"/>
    <property type="nucleotide sequence ID" value="XM_024446865.2"/>
</dbReference>
<dbReference type="RefSeq" id="XP_047276649.1">
    <molecule id="Q6PIW4-1"/>
    <property type="nucleotide sequence ID" value="XM_047420693.1"/>
</dbReference>
<dbReference type="RefSeq" id="XP_054214752.1">
    <molecule id="Q6PIW4-1"/>
    <property type="nucleotide sequence ID" value="XM_054358777.1"/>
</dbReference>
<dbReference type="RefSeq" id="XP_054214753.1">
    <molecule id="Q6PIW4-1"/>
    <property type="nucleotide sequence ID" value="XM_054358778.1"/>
</dbReference>
<dbReference type="RefSeq" id="XP_054214754.1">
    <molecule id="Q6PIW4-1"/>
    <property type="nucleotide sequence ID" value="XM_054358779.1"/>
</dbReference>
<dbReference type="RefSeq" id="XP_054214755.1">
    <molecule id="Q6PIW4-1"/>
    <property type="nucleotide sequence ID" value="XM_054358780.1"/>
</dbReference>
<dbReference type="RefSeq" id="XP_054214756.1">
    <molecule id="Q6PIW4-1"/>
    <property type="nucleotide sequence ID" value="XM_054358781.1"/>
</dbReference>
<dbReference type="RefSeq" id="XP_054214757.1">
    <molecule id="Q6PIW4-1"/>
    <property type="nucleotide sequence ID" value="XM_054358782.1"/>
</dbReference>
<dbReference type="PDB" id="3D8B">
    <property type="method" value="X-ray"/>
    <property type="resolution" value="2.00 A"/>
    <property type="chains" value="A/B=341-674"/>
</dbReference>
<dbReference type="PDB" id="8R64">
    <property type="method" value="EM"/>
    <property type="resolution" value="3.20 A"/>
    <property type="chains" value="A/B/C/D/E/F=284-674"/>
</dbReference>
<dbReference type="PDBsum" id="3D8B"/>
<dbReference type="PDBsum" id="8R64"/>
<dbReference type="EMDB" id="EMD-18946"/>
<dbReference type="SMR" id="Q6PIW4"/>
<dbReference type="BioGRID" id="122026">
    <property type="interactions" value="83"/>
</dbReference>
<dbReference type="ComplexPortal" id="CPX-9561">
    <property type="entry name" value="FLIP-FIGNL1 DNA interstrand crosslink repair complex"/>
</dbReference>
<dbReference type="FunCoup" id="Q6PIW4">
    <property type="interactions" value="2401"/>
</dbReference>
<dbReference type="IntAct" id="Q6PIW4">
    <property type="interactions" value="53"/>
</dbReference>
<dbReference type="MINT" id="Q6PIW4"/>
<dbReference type="STRING" id="9606.ENSP00000410811"/>
<dbReference type="GlyGen" id="Q6PIW4">
    <property type="glycosylation" value="2 sites, 1 O-linked glycan (1 site)"/>
</dbReference>
<dbReference type="iPTMnet" id="Q6PIW4"/>
<dbReference type="MetOSite" id="Q6PIW4"/>
<dbReference type="PhosphoSitePlus" id="Q6PIW4"/>
<dbReference type="BioMuta" id="FIGNL1"/>
<dbReference type="DMDM" id="158563967"/>
<dbReference type="CPTAC" id="CPTAC-1608"/>
<dbReference type="jPOST" id="Q6PIW4"/>
<dbReference type="MassIVE" id="Q6PIW4"/>
<dbReference type="PaxDb" id="9606-ENSP00000410811"/>
<dbReference type="PeptideAtlas" id="Q6PIW4"/>
<dbReference type="ProteomicsDB" id="67182">
    <molecule id="Q6PIW4-1"/>
</dbReference>
<dbReference type="ProteomicsDB" id="67183">
    <molecule id="Q6PIW4-2"/>
</dbReference>
<dbReference type="Pumba" id="Q6PIW4"/>
<dbReference type="Antibodypedia" id="27700">
    <property type="antibodies" value="143 antibodies from 26 providers"/>
</dbReference>
<dbReference type="DNASU" id="63979"/>
<dbReference type="Ensembl" id="ENST00000356889.8">
    <molecule id="Q6PIW4-1"/>
    <property type="protein sequence ID" value="ENSP00000349356.4"/>
    <property type="gene ID" value="ENSG00000132436.13"/>
</dbReference>
<dbReference type="Ensembl" id="ENST00000395556.6">
    <molecule id="Q6PIW4-1"/>
    <property type="protein sequence ID" value="ENSP00000378924.2"/>
    <property type="gene ID" value="ENSG00000132436.13"/>
</dbReference>
<dbReference type="Ensembl" id="ENST00000419119.1">
    <molecule id="Q6PIW4-1"/>
    <property type="protein sequence ID" value="ENSP00000410811.1"/>
    <property type="gene ID" value="ENSG00000132436.13"/>
</dbReference>
<dbReference type="Ensembl" id="ENST00000433017.6">
    <molecule id="Q6PIW4-1"/>
    <property type="protein sequence ID" value="ENSP00000399997.1"/>
    <property type="gene ID" value="ENSG00000132436.13"/>
</dbReference>
<dbReference type="Ensembl" id="ENST00000615084.4">
    <molecule id="Q6PIW4-1"/>
    <property type="protein sequence ID" value="ENSP00000483543.1"/>
    <property type="gene ID" value="ENSG00000132436.13"/>
</dbReference>
<dbReference type="Ensembl" id="ENST00000617389.4">
    <molecule id="Q6PIW4-1"/>
    <property type="protein sequence ID" value="ENSP00000483126.1"/>
    <property type="gene ID" value="ENSG00000132436.13"/>
</dbReference>
<dbReference type="GeneID" id="63979"/>
<dbReference type="KEGG" id="hsa:63979"/>
<dbReference type="MANE-Select" id="ENST00000433017.6">
    <property type="protein sequence ID" value="ENSP00000399997.1"/>
    <property type="RefSeq nucleotide sequence ID" value="NM_001287492.4"/>
    <property type="RefSeq protein sequence ID" value="NP_001274421.1"/>
</dbReference>
<dbReference type="UCSC" id="uc003tpc.5">
    <molecule id="Q6PIW4-1"/>
    <property type="organism name" value="human"/>
</dbReference>
<dbReference type="AGR" id="HGNC:13286"/>
<dbReference type="CTD" id="63979"/>
<dbReference type="DisGeNET" id="63979"/>
<dbReference type="GeneCards" id="FIGNL1"/>
<dbReference type="HGNC" id="HGNC:13286">
    <property type="gene designation" value="FIGNL1"/>
</dbReference>
<dbReference type="HPA" id="ENSG00000132436">
    <property type="expression patterns" value="Low tissue specificity"/>
</dbReference>
<dbReference type="MIM" id="615383">
    <property type="type" value="gene"/>
</dbReference>
<dbReference type="neXtProt" id="NX_Q6PIW4"/>
<dbReference type="OpenTargets" id="ENSG00000132436"/>
<dbReference type="PharmGKB" id="PA28148"/>
<dbReference type="VEuPathDB" id="HostDB:ENSG00000132436"/>
<dbReference type="eggNOG" id="KOG0740">
    <property type="taxonomic scope" value="Eukaryota"/>
</dbReference>
<dbReference type="GeneTree" id="ENSGT00940000161552"/>
<dbReference type="HOGENOM" id="CLU_000688_21_10_1"/>
<dbReference type="InParanoid" id="Q6PIW4"/>
<dbReference type="OMA" id="YSDKWES"/>
<dbReference type="OrthoDB" id="10251136at2759"/>
<dbReference type="PAN-GO" id="Q6PIW4">
    <property type="GO annotations" value="1 GO annotation based on evolutionary models"/>
</dbReference>
<dbReference type="PhylomeDB" id="Q6PIW4"/>
<dbReference type="TreeFam" id="TF105013"/>
<dbReference type="PathwayCommons" id="Q6PIW4"/>
<dbReference type="Reactome" id="R-HSA-5693568">
    <property type="pathway name" value="Resolution of D-loop Structures through Holliday Junction Intermediates"/>
</dbReference>
<dbReference type="Reactome" id="R-HSA-912446">
    <property type="pathway name" value="Meiotic recombination"/>
</dbReference>
<dbReference type="SignaLink" id="Q6PIW4"/>
<dbReference type="BioGRID-ORCS" id="63979">
    <property type="hits" value="16 hits in 1155 CRISPR screens"/>
</dbReference>
<dbReference type="EvolutionaryTrace" id="Q6PIW4"/>
<dbReference type="GenomeRNAi" id="63979"/>
<dbReference type="Pharos" id="Q6PIW4">
    <property type="development level" value="Tbio"/>
</dbReference>
<dbReference type="PRO" id="PR:Q6PIW4"/>
<dbReference type="Proteomes" id="UP000005640">
    <property type="component" value="Chromosome 7"/>
</dbReference>
<dbReference type="RNAct" id="Q6PIW4">
    <property type="molecule type" value="protein"/>
</dbReference>
<dbReference type="Bgee" id="ENSG00000132436">
    <property type="expression patterns" value="Expressed in secondary oocyte and 169 other cell types or tissues"/>
</dbReference>
<dbReference type="ExpressionAtlas" id="Q6PIW4">
    <property type="expression patterns" value="baseline and differential"/>
</dbReference>
<dbReference type="GO" id="GO:0005737">
    <property type="term" value="C:cytoplasm"/>
    <property type="evidence" value="ECO:0000250"/>
    <property type="project" value="UniProtKB"/>
</dbReference>
<dbReference type="GO" id="GO:0070062">
    <property type="term" value="C:extracellular exosome"/>
    <property type="evidence" value="ECO:0007005"/>
    <property type="project" value="UniProtKB"/>
</dbReference>
<dbReference type="GO" id="GO:0000228">
    <property type="term" value="C:nuclear chromosome"/>
    <property type="evidence" value="ECO:0000314"/>
    <property type="project" value="UniProtKB"/>
</dbReference>
<dbReference type="GO" id="GO:0005654">
    <property type="term" value="C:nucleoplasm"/>
    <property type="evidence" value="ECO:0000304"/>
    <property type="project" value="Reactome"/>
</dbReference>
<dbReference type="GO" id="GO:0005634">
    <property type="term" value="C:nucleus"/>
    <property type="evidence" value="ECO:0000250"/>
    <property type="project" value="UniProtKB"/>
</dbReference>
<dbReference type="GO" id="GO:0048471">
    <property type="term" value="C:perinuclear region of cytoplasm"/>
    <property type="evidence" value="ECO:0000250"/>
    <property type="project" value="UniProtKB"/>
</dbReference>
<dbReference type="GO" id="GO:0005524">
    <property type="term" value="F:ATP binding"/>
    <property type="evidence" value="ECO:0007669"/>
    <property type="project" value="UniProtKB-KW"/>
</dbReference>
<dbReference type="GO" id="GO:0016887">
    <property type="term" value="F:ATP hydrolysis activity"/>
    <property type="evidence" value="ECO:0000318"/>
    <property type="project" value="GO_Central"/>
</dbReference>
<dbReference type="GO" id="GO:0016787">
    <property type="term" value="F:hydrolase activity"/>
    <property type="evidence" value="ECO:0000250"/>
    <property type="project" value="UniProtKB"/>
</dbReference>
<dbReference type="GO" id="GO:0000287">
    <property type="term" value="F:magnesium ion binding"/>
    <property type="evidence" value="ECO:0000250"/>
    <property type="project" value="UniProtKB"/>
</dbReference>
<dbReference type="GO" id="GO:0008568">
    <property type="term" value="F:microtubule severing ATPase activity"/>
    <property type="evidence" value="ECO:0000318"/>
    <property type="project" value="GO_Central"/>
</dbReference>
<dbReference type="GO" id="GO:0046034">
    <property type="term" value="P:ATP metabolic process"/>
    <property type="evidence" value="ECO:0000250"/>
    <property type="project" value="UniProtKB"/>
</dbReference>
<dbReference type="GO" id="GO:0071479">
    <property type="term" value="P:cellular response to ionizing radiation"/>
    <property type="evidence" value="ECO:0000314"/>
    <property type="project" value="UniProtKB"/>
</dbReference>
<dbReference type="GO" id="GO:0007140">
    <property type="term" value="P:male meiotic nuclear division"/>
    <property type="evidence" value="ECO:0000250"/>
    <property type="project" value="UniProtKB"/>
</dbReference>
<dbReference type="GO" id="GO:0043066">
    <property type="term" value="P:negative regulation of apoptotic process"/>
    <property type="evidence" value="ECO:0000250"/>
    <property type="project" value="UniProtKB"/>
</dbReference>
<dbReference type="GO" id="GO:2001243">
    <property type="term" value="P:negative regulation of intrinsic apoptotic signaling pathway"/>
    <property type="evidence" value="ECO:0007669"/>
    <property type="project" value="Ensembl"/>
</dbReference>
<dbReference type="GO" id="GO:0001649">
    <property type="term" value="P:osteoblast differentiation"/>
    <property type="evidence" value="ECO:0000250"/>
    <property type="project" value="UniProtKB"/>
</dbReference>
<dbReference type="GO" id="GO:0033687">
    <property type="term" value="P:osteoblast proliferation"/>
    <property type="evidence" value="ECO:0000250"/>
    <property type="project" value="UniProtKB"/>
</dbReference>
<dbReference type="GO" id="GO:0051726">
    <property type="term" value="P:regulation of cell cycle"/>
    <property type="evidence" value="ECO:0000250"/>
    <property type="project" value="UniProtKB"/>
</dbReference>
<dbReference type="GO" id="GO:0010569">
    <property type="term" value="P:regulation of double-strand break repair via homologous recombination"/>
    <property type="evidence" value="ECO:0000314"/>
    <property type="project" value="UniProtKB"/>
</dbReference>
<dbReference type="CDD" id="cd19525">
    <property type="entry name" value="RecA-like_Figl-1"/>
    <property type="match status" value="1"/>
</dbReference>
<dbReference type="FunFam" id="1.10.8.60:FF:000022">
    <property type="entry name" value="Fidgetin like 1"/>
    <property type="match status" value="1"/>
</dbReference>
<dbReference type="FunFam" id="3.40.50.300:FF:000093">
    <property type="entry name" value="Fidgetin-like 1"/>
    <property type="match status" value="1"/>
</dbReference>
<dbReference type="Gene3D" id="1.10.8.60">
    <property type="match status" value="1"/>
</dbReference>
<dbReference type="Gene3D" id="3.40.50.300">
    <property type="entry name" value="P-loop containing nucleotide triphosphate hydrolases"/>
    <property type="match status" value="1"/>
</dbReference>
<dbReference type="InterPro" id="IPR003593">
    <property type="entry name" value="AAA+_ATPase"/>
</dbReference>
<dbReference type="InterPro" id="IPR041569">
    <property type="entry name" value="AAA_lid_3"/>
</dbReference>
<dbReference type="InterPro" id="IPR003959">
    <property type="entry name" value="ATPase_AAA_core"/>
</dbReference>
<dbReference type="InterPro" id="IPR003960">
    <property type="entry name" value="ATPase_AAA_CS"/>
</dbReference>
<dbReference type="InterPro" id="IPR047858">
    <property type="entry name" value="FIGNL1_ATPase"/>
</dbReference>
<dbReference type="InterPro" id="IPR050304">
    <property type="entry name" value="MT-severing_AAA_ATPase"/>
</dbReference>
<dbReference type="InterPro" id="IPR027417">
    <property type="entry name" value="P-loop_NTPase"/>
</dbReference>
<dbReference type="InterPro" id="IPR015415">
    <property type="entry name" value="Spast_Vps4_C"/>
</dbReference>
<dbReference type="PANTHER" id="PTHR23074">
    <property type="entry name" value="AAA DOMAIN-CONTAINING"/>
    <property type="match status" value="1"/>
</dbReference>
<dbReference type="PANTHER" id="PTHR23074:SF75">
    <property type="entry name" value="DYNEIN REGULATORY COMPLEX PROTEIN 11-RELATED"/>
    <property type="match status" value="1"/>
</dbReference>
<dbReference type="Pfam" id="PF00004">
    <property type="entry name" value="AAA"/>
    <property type="match status" value="1"/>
</dbReference>
<dbReference type="Pfam" id="PF17862">
    <property type="entry name" value="AAA_lid_3"/>
    <property type="match status" value="1"/>
</dbReference>
<dbReference type="Pfam" id="PF09336">
    <property type="entry name" value="Vps4_C"/>
    <property type="match status" value="1"/>
</dbReference>
<dbReference type="SMART" id="SM00382">
    <property type="entry name" value="AAA"/>
    <property type="match status" value="1"/>
</dbReference>
<dbReference type="SUPFAM" id="SSF52540">
    <property type="entry name" value="P-loop containing nucleoside triphosphate hydrolases"/>
    <property type="match status" value="1"/>
</dbReference>
<dbReference type="PROSITE" id="PS00674">
    <property type="entry name" value="AAA"/>
    <property type="match status" value="1"/>
</dbReference>
<sequence length="674" mass="74077">MQTSSSRSVHLSEWQKNYFAITSGICTGPKADAYRAQILRIQYAWANSEISQVCATKLFKKYAEKYSAIIDSDNVESGLNNYAENILTLAGSQQTDSDKWQSGLSINNVFKMSSVQKMMQAGKKFKDSLLEPALASVVIHKEATVFDLPKFSVCGSSQESDSLPNSAHDRDRTQDFPESNRLKLLQNAQPPMVTNTARTCPTFSAPVGESATAKFHVTPLFGNVKKENHSSAKENIGLNVFLSNQSCFPAACENPQRKSFYGSGTIDALSNPILNKACSKTEDNGPKEDSSLPTFKTAKEQLWVDQQKKYHQPQRASGSSYGGVKKSLGASRSRGILGKFVPPIPKQDGGEQNGGMQCKPYGAGPTEPAHPVDERLKNLEPKMIELIMNEIMDHGPPVNWEDIAGVEFAKATIKEIVVWPMLRPDIFTGLRGPPKGILLFGPPGTGKTLIGKCIASQSGATFFSISASSLTSKWVGEGEKMVRALFAVARCQQPAVIFIDEIDSLLSQRGDGEHESSRRIKTEFLVQLDGATTSSEDRILVVGATNRPQEIDEAARRRLVKRLYIPLPEASARKQIVINLMSKEQCCLSEEEIEQIVQQSDAFSGADMTQLCREASLGPIRSLQTADIATITPDQVRPIAYIDFENAFRTVRPSVSPKDLELYENWNKTFGCGK</sequence>
<evidence type="ECO:0000250" key="1"/>
<evidence type="ECO:0000250" key="2">
    <source>
        <dbReference type="UniProtKB" id="Q8BPY9"/>
    </source>
</evidence>
<evidence type="ECO:0000256" key="3">
    <source>
        <dbReference type="SAM" id="MobiDB-lite"/>
    </source>
</evidence>
<evidence type="ECO:0000269" key="4">
    <source>
    </source>
</evidence>
<evidence type="ECO:0000269" key="5">
    <source>
    </source>
</evidence>
<evidence type="ECO:0000269" key="6">
    <source>
    </source>
</evidence>
<evidence type="ECO:0000269" key="7">
    <source ref="15"/>
</evidence>
<evidence type="ECO:0000303" key="8">
    <source>
    </source>
</evidence>
<evidence type="ECO:0000305" key="9"/>
<evidence type="ECO:0000305" key="10">
    <source>
    </source>
</evidence>
<evidence type="ECO:0000305" key="11">
    <source ref="15"/>
</evidence>
<evidence type="ECO:0007744" key="12">
    <source>
    </source>
</evidence>
<evidence type="ECO:0007744" key="13">
    <source>
    </source>
</evidence>
<evidence type="ECO:0007744" key="14">
    <source>
    </source>
</evidence>
<evidence type="ECO:0007744" key="15">
    <source>
    </source>
</evidence>
<evidence type="ECO:0007829" key="16">
    <source>
        <dbReference type="PDB" id="3D8B"/>
    </source>
</evidence>
<evidence type="ECO:0007829" key="17">
    <source>
        <dbReference type="PDB" id="8R64"/>
    </source>
</evidence>
<proteinExistence type="evidence at protein level"/>
<name>FIGL1_HUMAN</name>
<comment type="function">
    <text evidence="2 5">Involved in DNA double-strand break (DBS) repair via homologous recombination (HR). Recruited at DSB sites independently of BRCA2, RAD51 and RAD51 paralogs in a H2AX-dependent manner. May regulate osteoblast proliferation and differentiation (PubMed:23754376). May play a role in the control of male meiosis dynamic (By similarity).</text>
</comment>
<comment type="catalytic activity">
    <reaction>
        <text>ATP + H2O = ADP + phosphate + H(+)</text>
        <dbReference type="Rhea" id="RHEA:13065"/>
        <dbReference type="ChEBI" id="CHEBI:15377"/>
        <dbReference type="ChEBI" id="CHEBI:15378"/>
        <dbReference type="ChEBI" id="CHEBI:30616"/>
        <dbReference type="ChEBI" id="CHEBI:43474"/>
        <dbReference type="ChEBI" id="CHEBI:456216"/>
    </reaction>
</comment>
<comment type="cofactor">
    <cofactor evidence="1">
        <name>Mg(2+)</name>
        <dbReference type="ChEBI" id="CHEBI:18420"/>
    </cofactor>
</comment>
<comment type="subunit">
    <text evidence="1 5 6 7">Hexamer (By similarity). Interacts (via N-terminal one-half region) with RAD51; the interaction is direct. Interacts (via N-terminal one-half region) with SPIDR (via the C-terminal region); the interaction is direct. Interacts with FIRRM; may regulate homologous recombination (PubMed:29608566).</text>
</comment>
<comment type="interaction">
    <interactant intactId="EBI-8468390">
        <id>Q6PIW4</id>
    </interactant>
    <interactant intactId="EBI-11128910">
        <id>Q9NSG2</id>
        <label>FIRRM</label>
    </interactant>
    <organismsDiffer>false</organismsDiffer>
    <experiments>6</experiments>
</comment>
<comment type="interaction">
    <interactant intactId="EBI-8468390">
        <id>Q6PIW4</id>
    </interactant>
    <interactant intactId="EBI-746252">
        <id>Q96CN9</id>
        <label>GCC1</label>
    </interactant>
    <organismsDiffer>false</organismsDiffer>
    <experiments>3</experiments>
</comment>
<comment type="interaction">
    <interactant intactId="EBI-8468390">
        <id>Q6PIW4</id>
    </interactant>
    <interactant intactId="EBI-2127319">
        <id>O14713</id>
        <label>ITGB1BP1</label>
    </interactant>
    <organismsDiffer>false</organismsDiffer>
    <experiments>3</experiments>
</comment>
<comment type="interaction">
    <interactant intactId="EBI-8468390">
        <id>Q6PIW4</id>
    </interactant>
    <interactant intactId="EBI-11318692">
        <id>Q14159</id>
        <label>SPIDR</label>
    </interactant>
    <organismsDiffer>false</organismsDiffer>
    <experiments>3</experiments>
</comment>
<comment type="subcellular location">
    <subcellularLocation>
        <location evidence="5">Nucleus</location>
    </subcellularLocation>
    <subcellularLocation>
        <location evidence="2">Cytoplasm</location>
    </subcellularLocation>
    <subcellularLocation>
        <location evidence="2">Cytoplasm</location>
        <location evidence="2">Perinuclear region</location>
    </subcellularLocation>
    <text>Together with RAD51 and a subset of H2A histone proteins, redistributed in discrete nuclear DNA damage-induced foci after ionizing radiation (IR) treatment (PubMed:23754376).</text>
</comment>
<comment type="alternative products">
    <event type="alternative splicing"/>
    <isoform>
        <id>Q6PIW4-1</id>
        <name>1</name>
        <sequence type="displayed"/>
    </isoform>
    <isoform>
        <id>Q6PIW4-2</id>
        <name>2</name>
        <sequence type="described" ref="VSP_027937"/>
    </isoform>
</comment>
<comment type="domain">
    <text evidence="5">The N-terminus is necessary for its recruitment to DNA damage sites.</text>
</comment>
<comment type="similarity">
    <text evidence="9">Belongs to the AAA ATPase family.</text>
</comment>
<comment type="sequence caution" evidence="9">
    <conflict type="erroneous initiation">
        <sequence resource="EMBL-CDS" id="BAB14567"/>
    </conflict>
</comment>
<feature type="chain" id="PRO_0000302723" description="Fidgetin-like protein 1">
    <location>
        <begin position="1"/>
        <end position="674"/>
    </location>
</feature>
<feature type="region of interest" description="Disordered" evidence="3">
    <location>
        <begin position="157"/>
        <end position="179"/>
    </location>
</feature>
<feature type="region of interest" description="Necessary and sufficient for interaction with RAD51" evidence="10">
    <location>
        <begin position="295"/>
        <end position="344"/>
    </location>
</feature>
<feature type="compositionally biased region" description="Basic and acidic residues" evidence="3">
    <location>
        <begin position="167"/>
        <end position="179"/>
    </location>
</feature>
<feature type="binding site" evidence="11">
    <location>
        <position position="404"/>
    </location>
    <ligand>
        <name>ATP</name>
        <dbReference type="ChEBI" id="CHEBI:30616"/>
    </ligand>
</feature>
<feature type="binding site" evidence="11">
    <location>
        <begin position="444"/>
        <end position="449"/>
    </location>
    <ligand>
        <name>ATP</name>
        <dbReference type="ChEBI" id="CHEBI:30616"/>
    </ligand>
</feature>
<feature type="modified residue" description="Phosphoserine" evidence="13 14">
    <location>
        <position position="259"/>
    </location>
</feature>
<feature type="modified residue" description="N6-acetyllysine" evidence="12">
    <location>
        <position position="339"/>
    </location>
</feature>
<feature type="cross-link" description="Glycyl lysine isopeptide (Lys-Gly) (interchain with G-Cter in SUMO2)" evidence="15">
    <location>
        <position position="225"/>
    </location>
</feature>
<feature type="splice variant" id="VSP_027937" description="In isoform 2." evidence="8">
    <location>
        <begin position="1"/>
        <end position="111"/>
    </location>
</feature>
<feature type="sequence variant" id="VAR_034941" description="In dbSNP:rs10235371." evidence="4">
    <original>V</original>
    <variation>M</variation>
    <location>
        <position position="137"/>
    </location>
</feature>
<feature type="sequence variant" id="VAR_034942" description="In dbSNP:rs35929700.">
    <original>H</original>
    <variation>Y</variation>
    <location>
        <position position="216"/>
    </location>
</feature>
<feature type="mutagenesis site" description="Reduces interaction with RAD51 and inhibits HR-mediated DNA repair. Strongly reduce, but does abolish, interaction with RAD51; when associated with E-340." evidence="5">
    <original>F</original>
    <variation>E</variation>
    <location>
        <position position="295"/>
    </location>
</feature>
<feature type="mutagenesis site" description="Reduces weakly interaction with RAD51. Strongly reduce, but does abolish, interaction with RAD51; when associated with E-295." evidence="5">
    <original>F</original>
    <variation>E</variation>
    <location>
        <position position="340"/>
    </location>
</feature>
<feature type="mutagenesis site" description="Inhibits HR-mediated DNA repair." evidence="5">
    <original>K</original>
    <variation>A</variation>
    <location>
        <position position="447"/>
    </location>
</feature>
<feature type="mutagenesis site" description="Inhibits HR-mediated DNA repair." evidence="5">
    <original>D</original>
    <variation>A</variation>
    <location>
        <position position="500"/>
    </location>
</feature>
<feature type="sequence conflict" description="In Ref. 1; BAB14426." evidence="9" ref="1">
    <original>E</original>
    <variation>G</variation>
    <location>
        <position position="614"/>
    </location>
</feature>
<feature type="turn" evidence="17">
    <location>
        <begin position="373"/>
        <end position="378"/>
    </location>
</feature>
<feature type="helix" evidence="16">
    <location>
        <begin position="381"/>
        <end position="390"/>
    </location>
</feature>
<feature type="helix" evidence="16">
    <location>
        <begin position="400"/>
        <end position="402"/>
    </location>
</feature>
<feature type="helix" evidence="16">
    <location>
        <begin position="407"/>
        <end position="416"/>
    </location>
</feature>
<feature type="helix" evidence="16">
    <location>
        <begin position="418"/>
        <end position="422"/>
    </location>
</feature>
<feature type="turn" evidence="16">
    <location>
        <begin position="424"/>
        <end position="426"/>
    </location>
</feature>
<feature type="helix" evidence="16">
    <location>
        <begin position="429"/>
        <end position="431"/>
    </location>
</feature>
<feature type="strand" evidence="16">
    <location>
        <begin position="435"/>
        <end position="442"/>
    </location>
</feature>
<feature type="helix" evidence="16">
    <location>
        <begin position="447"/>
        <end position="457"/>
    </location>
</feature>
<feature type="strand" evidence="16">
    <location>
        <begin position="461"/>
        <end position="466"/>
    </location>
</feature>
<feature type="helix" evidence="16">
    <location>
        <begin position="467"/>
        <end position="470"/>
    </location>
</feature>
<feature type="helix" evidence="16">
    <location>
        <begin position="477"/>
        <end position="491"/>
    </location>
</feature>
<feature type="strand" evidence="16">
    <location>
        <begin position="494"/>
        <end position="500"/>
    </location>
</feature>
<feature type="helix" evidence="16">
    <location>
        <begin position="502"/>
        <end position="505"/>
    </location>
</feature>
<feature type="helix" evidence="16">
    <location>
        <begin position="516"/>
        <end position="529"/>
    </location>
</feature>
<feature type="strand" evidence="16">
    <location>
        <begin position="539"/>
        <end position="546"/>
    </location>
</feature>
<feature type="helix" evidence="16">
    <location>
        <begin position="548"/>
        <end position="550"/>
    </location>
</feature>
<feature type="helix" evidence="16">
    <location>
        <begin position="553"/>
        <end position="556"/>
    </location>
</feature>
<feature type="strand" evidence="16">
    <location>
        <begin position="561"/>
        <end position="564"/>
    </location>
</feature>
<feature type="helix" evidence="16">
    <location>
        <begin position="570"/>
        <end position="582"/>
    </location>
</feature>
<feature type="helix" evidence="16">
    <location>
        <begin position="590"/>
        <end position="599"/>
    </location>
</feature>
<feature type="turn" evidence="16">
    <location>
        <begin position="600"/>
        <end position="602"/>
    </location>
</feature>
<feature type="helix" evidence="16">
    <location>
        <begin position="605"/>
        <end position="616"/>
    </location>
</feature>
<feature type="helix" evidence="16">
    <location>
        <begin position="618"/>
        <end position="622"/>
    </location>
</feature>
<feature type="turn" evidence="17">
    <location>
        <begin position="628"/>
        <end position="630"/>
    </location>
</feature>
<feature type="helix" evidence="16">
    <location>
        <begin position="633"/>
        <end position="635"/>
    </location>
</feature>
<feature type="helix" evidence="16">
    <location>
        <begin position="641"/>
        <end position="651"/>
    </location>
</feature>
<feature type="helix" evidence="16">
    <location>
        <begin position="652"/>
        <end position="654"/>
    </location>
</feature>
<feature type="helix" evidence="17">
    <location>
        <begin position="657"/>
        <end position="659"/>
    </location>
</feature>
<feature type="helix" evidence="16">
    <location>
        <begin position="660"/>
        <end position="670"/>
    </location>
</feature>
<keyword id="KW-0002">3D-structure</keyword>
<keyword id="KW-0007">Acetylation</keyword>
<keyword id="KW-0025">Alternative splicing</keyword>
<keyword id="KW-0067">ATP-binding</keyword>
<keyword id="KW-0963">Cytoplasm</keyword>
<keyword id="KW-0378">Hydrolase</keyword>
<keyword id="KW-1017">Isopeptide bond</keyword>
<keyword id="KW-0460">Magnesium</keyword>
<keyword id="KW-0479">Metal-binding</keyword>
<keyword id="KW-0547">Nucleotide-binding</keyword>
<keyword id="KW-0539">Nucleus</keyword>
<keyword id="KW-0597">Phosphoprotein</keyword>
<keyword id="KW-1267">Proteomics identification</keyword>
<keyword id="KW-1185">Reference proteome</keyword>
<keyword id="KW-0832">Ubl conjugation</keyword>
<reference key="1">
    <citation type="journal article" date="2004" name="Nat. Genet.">
        <title>Complete sequencing and characterization of 21,243 full-length human cDNAs.</title>
        <authorList>
            <person name="Ota T."/>
            <person name="Suzuki Y."/>
            <person name="Nishikawa T."/>
            <person name="Otsuki T."/>
            <person name="Sugiyama T."/>
            <person name="Irie R."/>
            <person name="Wakamatsu A."/>
            <person name="Hayashi K."/>
            <person name="Sato H."/>
            <person name="Nagai K."/>
            <person name="Kimura K."/>
            <person name="Makita H."/>
            <person name="Sekine M."/>
            <person name="Obayashi M."/>
            <person name="Nishi T."/>
            <person name="Shibahara T."/>
            <person name="Tanaka T."/>
            <person name="Ishii S."/>
            <person name="Yamamoto J."/>
            <person name="Saito K."/>
            <person name="Kawai Y."/>
            <person name="Isono Y."/>
            <person name="Nakamura Y."/>
            <person name="Nagahari K."/>
            <person name="Murakami K."/>
            <person name="Yasuda T."/>
            <person name="Iwayanagi T."/>
            <person name="Wagatsuma M."/>
            <person name="Shiratori A."/>
            <person name="Sudo H."/>
            <person name="Hosoiri T."/>
            <person name="Kaku Y."/>
            <person name="Kodaira H."/>
            <person name="Kondo H."/>
            <person name="Sugawara M."/>
            <person name="Takahashi M."/>
            <person name="Kanda K."/>
            <person name="Yokoi T."/>
            <person name="Furuya T."/>
            <person name="Kikkawa E."/>
            <person name="Omura Y."/>
            <person name="Abe K."/>
            <person name="Kamihara K."/>
            <person name="Katsuta N."/>
            <person name="Sato K."/>
            <person name="Tanikawa M."/>
            <person name="Yamazaki M."/>
            <person name="Ninomiya K."/>
            <person name="Ishibashi T."/>
            <person name="Yamashita H."/>
            <person name="Murakawa K."/>
            <person name="Fujimori K."/>
            <person name="Tanai H."/>
            <person name="Kimata M."/>
            <person name="Watanabe M."/>
            <person name="Hiraoka S."/>
            <person name="Chiba Y."/>
            <person name="Ishida S."/>
            <person name="Ono Y."/>
            <person name="Takiguchi S."/>
            <person name="Watanabe S."/>
            <person name="Yosida M."/>
            <person name="Hotuta T."/>
            <person name="Kusano J."/>
            <person name="Kanehori K."/>
            <person name="Takahashi-Fujii A."/>
            <person name="Hara H."/>
            <person name="Tanase T.-O."/>
            <person name="Nomura Y."/>
            <person name="Togiya S."/>
            <person name="Komai F."/>
            <person name="Hara R."/>
            <person name="Takeuchi K."/>
            <person name="Arita M."/>
            <person name="Imose N."/>
            <person name="Musashino K."/>
            <person name="Yuuki H."/>
            <person name="Oshima A."/>
            <person name="Sasaki N."/>
            <person name="Aotsuka S."/>
            <person name="Yoshikawa Y."/>
            <person name="Matsunawa H."/>
            <person name="Ichihara T."/>
            <person name="Shiohata N."/>
            <person name="Sano S."/>
            <person name="Moriya S."/>
            <person name="Momiyama H."/>
            <person name="Satoh N."/>
            <person name="Takami S."/>
            <person name="Terashima Y."/>
            <person name="Suzuki O."/>
            <person name="Nakagawa S."/>
            <person name="Senoh A."/>
            <person name="Mizoguchi H."/>
            <person name="Goto Y."/>
            <person name="Shimizu F."/>
            <person name="Wakebe H."/>
            <person name="Hishigaki H."/>
            <person name="Watanabe T."/>
            <person name="Sugiyama A."/>
            <person name="Takemoto M."/>
            <person name="Kawakami B."/>
            <person name="Yamazaki M."/>
            <person name="Watanabe K."/>
            <person name="Kumagai A."/>
            <person name="Itakura S."/>
            <person name="Fukuzumi Y."/>
            <person name="Fujimori Y."/>
            <person name="Komiyama M."/>
            <person name="Tashiro H."/>
            <person name="Tanigami A."/>
            <person name="Fujiwara T."/>
            <person name="Ono T."/>
            <person name="Yamada K."/>
            <person name="Fujii Y."/>
            <person name="Ozaki K."/>
            <person name="Hirao M."/>
            <person name="Ohmori Y."/>
            <person name="Kawabata A."/>
            <person name="Hikiji T."/>
            <person name="Kobatake N."/>
            <person name="Inagaki H."/>
            <person name="Ikema Y."/>
            <person name="Okamoto S."/>
            <person name="Okitani R."/>
            <person name="Kawakami T."/>
            <person name="Noguchi S."/>
            <person name="Itoh T."/>
            <person name="Shigeta K."/>
            <person name="Senba T."/>
            <person name="Matsumura K."/>
            <person name="Nakajima Y."/>
            <person name="Mizuno T."/>
            <person name="Morinaga M."/>
            <person name="Sasaki M."/>
            <person name="Togashi T."/>
            <person name="Oyama M."/>
            <person name="Hata H."/>
            <person name="Watanabe M."/>
            <person name="Komatsu T."/>
            <person name="Mizushima-Sugano J."/>
            <person name="Satoh T."/>
            <person name="Shirai Y."/>
            <person name="Takahashi Y."/>
            <person name="Nakagawa K."/>
            <person name="Okumura K."/>
            <person name="Nagase T."/>
            <person name="Nomura N."/>
            <person name="Kikuchi H."/>
            <person name="Masuho Y."/>
            <person name="Yamashita R."/>
            <person name="Nakai K."/>
            <person name="Yada T."/>
            <person name="Nakamura Y."/>
            <person name="Ohara O."/>
            <person name="Isogai T."/>
            <person name="Sugano S."/>
        </authorList>
    </citation>
    <scope>NUCLEOTIDE SEQUENCE [LARGE SCALE MRNA] (ISOFORM 1)</scope>
    <source>
        <tissue>Ovary</tissue>
    </source>
</reference>
<reference key="2">
    <citation type="journal article" date="2007" name="BMC Genomics">
        <title>The full-ORF clone resource of the German cDNA consortium.</title>
        <authorList>
            <person name="Bechtel S."/>
            <person name="Rosenfelder H."/>
            <person name="Duda A."/>
            <person name="Schmidt C.P."/>
            <person name="Ernst U."/>
            <person name="Wellenreuther R."/>
            <person name="Mehrle A."/>
            <person name="Schuster C."/>
            <person name="Bahr A."/>
            <person name="Bloecker H."/>
            <person name="Heubner D."/>
            <person name="Hoerlein A."/>
            <person name="Michel G."/>
            <person name="Wedler H."/>
            <person name="Koehrer K."/>
            <person name="Ottenwaelder B."/>
            <person name="Poustka A."/>
            <person name="Wiemann S."/>
            <person name="Schupp I."/>
        </authorList>
    </citation>
    <scope>NUCLEOTIDE SEQUENCE [LARGE SCALE MRNA] (ISOFORM 2)</scope>
    <source>
        <tissue>Testis</tissue>
    </source>
</reference>
<reference key="3">
    <citation type="journal article" date="2003" name="Nature">
        <title>The DNA sequence of human chromosome 7.</title>
        <authorList>
            <person name="Hillier L.W."/>
            <person name="Fulton R.S."/>
            <person name="Fulton L.A."/>
            <person name="Graves T.A."/>
            <person name="Pepin K.H."/>
            <person name="Wagner-McPherson C."/>
            <person name="Layman D."/>
            <person name="Maas J."/>
            <person name="Jaeger S."/>
            <person name="Walker R."/>
            <person name="Wylie K."/>
            <person name="Sekhon M."/>
            <person name="Becker M.C."/>
            <person name="O'Laughlin M.D."/>
            <person name="Schaller M.E."/>
            <person name="Fewell G.A."/>
            <person name="Delehaunty K.D."/>
            <person name="Miner T.L."/>
            <person name="Nash W.E."/>
            <person name="Cordes M."/>
            <person name="Du H."/>
            <person name="Sun H."/>
            <person name="Edwards J."/>
            <person name="Bradshaw-Cordum H."/>
            <person name="Ali J."/>
            <person name="Andrews S."/>
            <person name="Isak A."/>
            <person name="Vanbrunt A."/>
            <person name="Nguyen C."/>
            <person name="Du F."/>
            <person name="Lamar B."/>
            <person name="Courtney L."/>
            <person name="Kalicki J."/>
            <person name="Ozersky P."/>
            <person name="Bielicki L."/>
            <person name="Scott K."/>
            <person name="Holmes A."/>
            <person name="Harkins R."/>
            <person name="Harris A."/>
            <person name="Strong C.M."/>
            <person name="Hou S."/>
            <person name="Tomlinson C."/>
            <person name="Dauphin-Kohlberg S."/>
            <person name="Kozlowicz-Reilly A."/>
            <person name="Leonard S."/>
            <person name="Rohlfing T."/>
            <person name="Rock S.M."/>
            <person name="Tin-Wollam A.-M."/>
            <person name="Abbott A."/>
            <person name="Minx P."/>
            <person name="Maupin R."/>
            <person name="Strowmatt C."/>
            <person name="Latreille P."/>
            <person name="Miller N."/>
            <person name="Johnson D."/>
            <person name="Murray J."/>
            <person name="Woessner J.P."/>
            <person name="Wendl M.C."/>
            <person name="Yang S.-P."/>
            <person name="Schultz B.R."/>
            <person name="Wallis J.W."/>
            <person name="Spieth J."/>
            <person name="Bieri T.A."/>
            <person name="Nelson J.O."/>
            <person name="Berkowicz N."/>
            <person name="Wohldmann P.E."/>
            <person name="Cook L.L."/>
            <person name="Hickenbotham M.T."/>
            <person name="Eldred J."/>
            <person name="Williams D."/>
            <person name="Bedell J.A."/>
            <person name="Mardis E.R."/>
            <person name="Clifton S.W."/>
            <person name="Chissoe S.L."/>
            <person name="Marra M.A."/>
            <person name="Raymond C."/>
            <person name="Haugen E."/>
            <person name="Gillett W."/>
            <person name="Zhou Y."/>
            <person name="James R."/>
            <person name="Phelps K."/>
            <person name="Iadanoto S."/>
            <person name="Bubb K."/>
            <person name="Simms E."/>
            <person name="Levy R."/>
            <person name="Clendenning J."/>
            <person name="Kaul R."/>
            <person name="Kent W.J."/>
            <person name="Furey T.S."/>
            <person name="Baertsch R.A."/>
            <person name="Brent M.R."/>
            <person name="Keibler E."/>
            <person name="Flicek P."/>
            <person name="Bork P."/>
            <person name="Suyama M."/>
            <person name="Bailey J.A."/>
            <person name="Portnoy M.E."/>
            <person name="Torrents D."/>
            <person name="Chinwalla A.T."/>
            <person name="Gish W.R."/>
            <person name="Eddy S.R."/>
            <person name="McPherson J.D."/>
            <person name="Olson M.V."/>
            <person name="Eichler E.E."/>
            <person name="Green E.D."/>
            <person name="Waterston R.H."/>
            <person name="Wilson R.K."/>
        </authorList>
    </citation>
    <scope>NUCLEOTIDE SEQUENCE [LARGE SCALE GENOMIC DNA]</scope>
</reference>
<reference key="4">
    <citation type="submission" date="2005-09" db="EMBL/GenBank/DDBJ databases">
        <authorList>
            <person name="Mural R.J."/>
            <person name="Istrail S."/>
            <person name="Sutton G.G."/>
            <person name="Florea L."/>
            <person name="Halpern A.L."/>
            <person name="Mobarry C.M."/>
            <person name="Lippert R."/>
            <person name="Walenz B."/>
            <person name="Shatkay H."/>
            <person name="Dew I."/>
            <person name="Miller J.R."/>
            <person name="Flanigan M.J."/>
            <person name="Edwards N.J."/>
            <person name="Bolanos R."/>
            <person name="Fasulo D."/>
            <person name="Halldorsson B.V."/>
            <person name="Hannenhalli S."/>
            <person name="Turner R."/>
            <person name="Yooseph S."/>
            <person name="Lu F."/>
            <person name="Nusskern D.R."/>
            <person name="Shue B.C."/>
            <person name="Zheng X.H."/>
            <person name="Zhong F."/>
            <person name="Delcher A.L."/>
            <person name="Huson D.H."/>
            <person name="Kravitz S.A."/>
            <person name="Mouchard L."/>
            <person name="Reinert K."/>
            <person name="Remington K.A."/>
            <person name="Clark A.G."/>
            <person name="Waterman M.S."/>
            <person name="Eichler E.E."/>
            <person name="Adams M.D."/>
            <person name="Hunkapiller M.W."/>
            <person name="Myers E.W."/>
            <person name="Venter J.C."/>
        </authorList>
    </citation>
    <scope>NUCLEOTIDE SEQUENCE [LARGE SCALE GENOMIC DNA]</scope>
</reference>
<reference key="5">
    <citation type="journal article" date="2003" name="Science">
        <title>Human chromosome 7: DNA sequence and biology.</title>
        <authorList>
            <person name="Scherer S.W."/>
            <person name="Cheung J."/>
            <person name="MacDonald J.R."/>
            <person name="Osborne L.R."/>
            <person name="Nakabayashi K."/>
            <person name="Herbrick J.-A."/>
            <person name="Carson A.R."/>
            <person name="Parker-Katiraee L."/>
            <person name="Skaug J."/>
            <person name="Khaja R."/>
            <person name="Zhang J."/>
            <person name="Hudek A.K."/>
            <person name="Li M."/>
            <person name="Haddad M."/>
            <person name="Duggan G.E."/>
            <person name="Fernandez B.A."/>
            <person name="Kanematsu E."/>
            <person name="Gentles S."/>
            <person name="Christopoulos C.C."/>
            <person name="Choufani S."/>
            <person name="Kwasnicka D."/>
            <person name="Zheng X.H."/>
            <person name="Lai Z."/>
            <person name="Nusskern D.R."/>
            <person name="Zhang Q."/>
            <person name="Gu Z."/>
            <person name="Lu F."/>
            <person name="Zeesman S."/>
            <person name="Nowaczyk M.J."/>
            <person name="Teshima I."/>
            <person name="Chitayat D."/>
            <person name="Shuman C."/>
            <person name="Weksberg R."/>
            <person name="Zackai E.H."/>
            <person name="Grebe T.A."/>
            <person name="Cox S.R."/>
            <person name="Kirkpatrick S.J."/>
            <person name="Rahman N."/>
            <person name="Friedman J.M."/>
            <person name="Heng H.H.Q."/>
            <person name="Pelicci P.G."/>
            <person name="Lo-Coco F."/>
            <person name="Belloni E."/>
            <person name="Shaffer L.G."/>
            <person name="Pober B."/>
            <person name="Morton C.C."/>
            <person name="Gusella J.F."/>
            <person name="Bruns G.A.P."/>
            <person name="Korf B.R."/>
            <person name="Quade B.J."/>
            <person name="Ligon A.H."/>
            <person name="Ferguson H."/>
            <person name="Higgins A.W."/>
            <person name="Leach N.T."/>
            <person name="Herrick S.R."/>
            <person name="Lemyre E."/>
            <person name="Farra C.G."/>
            <person name="Kim H.-G."/>
            <person name="Summers A.M."/>
            <person name="Gripp K.W."/>
            <person name="Roberts W."/>
            <person name="Szatmari P."/>
            <person name="Winsor E.J.T."/>
            <person name="Grzeschik K.-H."/>
            <person name="Teebi A."/>
            <person name="Minassian B.A."/>
            <person name="Kere J."/>
            <person name="Armengol L."/>
            <person name="Pujana M.A."/>
            <person name="Estivill X."/>
            <person name="Wilson M.D."/>
            <person name="Koop B.F."/>
            <person name="Tosi S."/>
            <person name="Moore G.E."/>
            <person name="Boright A.P."/>
            <person name="Zlotorynski E."/>
            <person name="Kerem B."/>
            <person name="Kroisel P.M."/>
            <person name="Petek E."/>
            <person name="Oscier D.G."/>
            <person name="Mould S.J."/>
            <person name="Doehner H."/>
            <person name="Doehner K."/>
            <person name="Rommens J.M."/>
            <person name="Vincent J.B."/>
            <person name="Venter J.C."/>
            <person name="Li P.W."/>
            <person name="Mural R.J."/>
            <person name="Adams M.D."/>
            <person name="Tsui L.-C."/>
        </authorList>
    </citation>
    <scope>NUCLEOTIDE SEQUENCE [LARGE SCALE GENOMIC DNA]</scope>
</reference>
<reference key="6">
    <citation type="submission" date="2006-12" db="EMBL/GenBank/DDBJ databases">
        <authorList>
            <person name="Mural R.J."/>
            <person name="Istrail S."/>
            <person name="Sutton G.G."/>
            <person name="Florea L."/>
            <person name="Halpern A.L."/>
            <person name="Mobarry C.M."/>
            <person name="Lippert R."/>
            <person name="Walenz B."/>
            <person name="Shatkay H."/>
            <person name="Dew I."/>
            <person name="Miller J.R."/>
            <person name="Flanigan M.J."/>
            <person name="Edwards N.J."/>
            <person name="Bolanos R."/>
            <person name="Fasulo D."/>
            <person name="Halldorsson B.V."/>
            <person name="Hannenhalli S."/>
            <person name="Turner R."/>
            <person name="Yooseph S."/>
            <person name="Lu F."/>
            <person name="Nusskern D.R."/>
            <person name="Shue B.C."/>
            <person name="Zheng X.H."/>
            <person name="Zhong F."/>
            <person name="Delcher A.L."/>
            <person name="Huson D.H."/>
            <person name="Kravitz S.A."/>
            <person name="Mouchard L."/>
            <person name="Reinert K."/>
            <person name="Remington K.A."/>
            <person name="Clark A.G."/>
            <person name="Waterman M.S."/>
            <person name="Eichler E.E."/>
            <person name="Adams M.D."/>
            <person name="Hunkapiller M.W."/>
            <person name="Myers E.W."/>
            <person name="Venter J.C."/>
        </authorList>
    </citation>
    <scope>NUCLEOTIDE SEQUENCE [LARGE SCALE GENOMIC DNA]</scope>
</reference>
<reference key="7">
    <citation type="journal article" date="2004" name="Genome Res.">
        <title>The status, quality, and expansion of the NIH full-length cDNA project: the Mammalian Gene Collection (MGC).</title>
        <authorList>
            <consortium name="The MGC Project Team"/>
        </authorList>
    </citation>
    <scope>NUCLEOTIDE SEQUENCE [LARGE SCALE MRNA] (ISOFORM 1)</scope>
    <scope>VARIANT MET-137</scope>
    <source>
        <tissue>Pancreas</tissue>
        <tissue>Skin</tissue>
    </source>
</reference>
<reference key="8">
    <citation type="journal article" date="2009" name="Science">
        <title>Lysine acetylation targets protein complexes and co-regulates major cellular functions.</title>
        <authorList>
            <person name="Choudhary C."/>
            <person name="Kumar C."/>
            <person name="Gnad F."/>
            <person name="Nielsen M.L."/>
            <person name="Rehman M."/>
            <person name="Walther T.C."/>
            <person name="Olsen J.V."/>
            <person name="Mann M."/>
        </authorList>
    </citation>
    <scope>ACETYLATION [LARGE SCALE ANALYSIS] AT LYS-339</scope>
    <scope>IDENTIFICATION BY MASS SPECTROMETRY [LARGE SCALE ANALYSIS]</scope>
</reference>
<reference key="9">
    <citation type="journal article" date="2010" name="Sci. Signal.">
        <title>Quantitative phosphoproteomics reveals widespread full phosphorylation site occupancy during mitosis.</title>
        <authorList>
            <person name="Olsen J.V."/>
            <person name="Vermeulen M."/>
            <person name="Santamaria A."/>
            <person name="Kumar C."/>
            <person name="Miller M.L."/>
            <person name="Jensen L.J."/>
            <person name="Gnad F."/>
            <person name="Cox J."/>
            <person name="Jensen T.S."/>
            <person name="Nigg E.A."/>
            <person name="Brunak S."/>
            <person name="Mann M."/>
        </authorList>
    </citation>
    <scope>PHOSPHORYLATION [LARGE SCALE ANALYSIS] AT SER-259</scope>
    <scope>IDENTIFICATION BY MASS SPECTROMETRY [LARGE SCALE ANALYSIS]</scope>
    <source>
        <tissue>Cervix carcinoma</tissue>
    </source>
</reference>
<reference key="10">
    <citation type="journal article" date="2011" name="BMC Syst. Biol.">
        <title>Initial characterization of the human central proteome.</title>
        <authorList>
            <person name="Burkard T.R."/>
            <person name="Planyavsky M."/>
            <person name="Kaupe I."/>
            <person name="Breitwieser F.P."/>
            <person name="Buerckstuemmer T."/>
            <person name="Bennett K.L."/>
            <person name="Superti-Furga G."/>
            <person name="Colinge J."/>
        </authorList>
    </citation>
    <scope>IDENTIFICATION BY MASS SPECTROMETRY [LARGE SCALE ANALYSIS]</scope>
</reference>
<reference key="11">
    <citation type="journal article" date="2013" name="J. Proteome Res.">
        <title>Toward a comprehensive characterization of a human cancer cell phosphoproteome.</title>
        <authorList>
            <person name="Zhou H."/>
            <person name="Di Palma S."/>
            <person name="Preisinger C."/>
            <person name="Peng M."/>
            <person name="Polat A.N."/>
            <person name="Heck A.J."/>
            <person name="Mohammed S."/>
        </authorList>
    </citation>
    <scope>PHOSPHORYLATION [LARGE SCALE ANALYSIS] AT SER-259</scope>
    <scope>IDENTIFICATION BY MASS SPECTROMETRY [LARGE SCALE ANALYSIS]</scope>
    <source>
        <tissue>Erythroleukemia</tissue>
    </source>
</reference>
<reference key="12">
    <citation type="journal article" date="2013" name="Proc. Natl. Acad. Sci. U.S.A.">
        <title>FIGNL1-containing protein complex is required for efficient homologous recombination repair.</title>
        <authorList>
            <person name="Yuan J."/>
            <person name="Chen J."/>
        </authorList>
    </citation>
    <scope>FUNCTION</scope>
    <scope>INTERACTION WITH RAD51 AND SPIDR</scope>
    <scope>SUBCELLULAR LOCATION</scope>
    <scope>MUTAGENESIS OF PHE-295; PHE-340; LYS-447 AND ASP-500</scope>
    <scope>IDENTIFICATION BY MASS SPECTROMETRY</scope>
</reference>
<reference key="13">
    <citation type="journal article" date="2017" name="Nat. Struct. Mol. Biol.">
        <title>Site-specific mapping of the human SUMO proteome reveals co-modification with phosphorylation.</title>
        <authorList>
            <person name="Hendriks I.A."/>
            <person name="Lyon D."/>
            <person name="Young C."/>
            <person name="Jensen L.J."/>
            <person name="Vertegaal A.C."/>
            <person name="Nielsen M.L."/>
        </authorList>
    </citation>
    <scope>SUMOYLATION [LARGE SCALE ANALYSIS] AT LYS-225</scope>
    <scope>IDENTIFICATION BY MASS SPECTROMETRY [LARGE SCALE ANALYSIS]</scope>
</reference>
<reference key="14">
    <citation type="journal article" date="2018" name="PLoS Genet.">
        <title>FIGL1 and its novel partner FLIP form a conserved complex that regulates homologous recombination.</title>
        <authorList>
            <person name="Fernandes J.B."/>
            <person name="Duhamel M."/>
            <person name="Seguela-Arnaud M."/>
            <person name="Froger N."/>
            <person name="Girard C."/>
            <person name="Choinard S."/>
            <person name="Solier V."/>
            <person name="De Winne N."/>
            <person name="De Jaeger G."/>
            <person name="Gevaert K."/>
            <person name="Andrey P."/>
            <person name="Grelon M."/>
            <person name="Guerois R."/>
            <person name="Kumar R."/>
            <person name="Mercier R."/>
        </authorList>
    </citation>
    <scope>INTERACTION WITH FIRRM</scope>
</reference>
<reference key="15">
    <citation type="submission" date="2009-02" db="PDB data bank">
        <title>Human fidgetin-like protein 1.</title>
        <authorList>
            <consortium name="Structural genomics consortium (SGC)"/>
        </authorList>
    </citation>
    <scope>X-RAY CRYSTALLOGRAPHY (2.0 ANGSTROMS) OF 341-674 IN COMPLEX WITH ADP</scope>
</reference>
<protein>
    <recommendedName>
        <fullName>Fidgetin-like protein 1</fullName>
        <ecNumber>3.6.4.-</ecNumber>
    </recommendedName>
</protein>
<organism>
    <name type="scientific">Homo sapiens</name>
    <name type="common">Human</name>
    <dbReference type="NCBI Taxonomy" id="9606"/>
    <lineage>
        <taxon>Eukaryota</taxon>
        <taxon>Metazoa</taxon>
        <taxon>Chordata</taxon>
        <taxon>Craniata</taxon>
        <taxon>Vertebrata</taxon>
        <taxon>Euteleostomi</taxon>
        <taxon>Mammalia</taxon>
        <taxon>Eutheria</taxon>
        <taxon>Euarchontoglires</taxon>
        <taxon>Primates</taxon>
        <taxon>Haplorrhini</taxon>
        <taxon>Catarrhini</taxon>
        <taxon>Hominidae</taxon>
        <taxon>Homo</taxon>
    </lineage>
</organism>
<accession>Q6PIW4</accession>
<accession>D3DVM6</accession>
<accession>Q86V18</accession>
<accession>Q8ND59</accession>
<accession>Q9H8P1</accession>
<accession>Q9H917</accession>
<gene>
    <name type="primary">FIGNL1</name>
</gene>